<sequence>MPENTAIASIFTAIVCFKFIILTLEAKEKSNLIRPEFKHPSPEQAAGILNRSFFWWFNPLLLTGSKQRLAVDDLFFNDDGLTFDAWRDIITRRWAKADISKPHALLKVMLATFKGLLLAGILPRLCLTGPETTTSNKVAYGLIAAYAIVYIGIAVMSTMSQHKNYRTIVAIRGSAVSLIYQHTLRLTSSSTSTSSSLTLINNDVERMGHGMREVHEIWASLIEIALSLWLLEVRLGVSVVAAVFVIIGNICTLLGCVFGFVKMGLLLGDRQKVWLEAIEKRTSSTIATLGSIRGIKSTGATDIVQRITTRLRLDEIRISLKYRELLVGIVTLSYVSTTMAPVFAFATYSIISNSRGTTPLLAASAYTSLTIFSLLGQAVSKWISSSVDIITTIACLERVRQYLATNLRVDPRTIESYIKPIDSSNSPRLRNSDISQTEMLDMGSVDQSQYHPNSVGEVLREVPLAKMMITIRDCSACWSKGSEMAISEINLTILKGSLAMVIGPIGSGKSTLLKVILGEMPHTTGTVIVGRSEAAFCGQSPWLTNVSVRNNIIGVSYLDANWYNTVVNACALDRDFEQLPDGDNTVIGSKGVLLSGGQKSRLALARALYARNDLVILDDVFSGLDAKTEQRVFESVLGSHGILRQGGTTTVLATNSVRNISLADHIVVMGSDGKITDQGTYQNLVFASSYLESLGTRQKTLNISDSEKSKDDTVSGLAVASAMHQPVDSDNRGDKDLTIYKYYIDTVGWVTWWVFVLLCSGFVFGLVFPQIWIQFWTEANARQANYRLAYYLSLYALWPLMAIVIFLGACAWLMIRMVSKAAIQFHGILLNSALSAPLVYFSTTDSGEVSNRFTQDLNLIDMELPTALIGTTVTFLSCIAQIGVIIYGSSYVAAAIPALIVFLYYIQLFYLRTSRQLRLLELEAKAPLLSHFMESIHGLVTIRAFGWTEKFTHQNHDLLERSQRPFYLLYCAQRWLNLTLELAVAFLAIILVSIALTTRESSGAKIGVALLSIVGFGLNLKTLVYTWTSLEIAMGAVSRIRHFAINTSSEDLPGEDRTLPPDWPHEGVIRFQSVSAAYSPTSHPVLNDLSFTVKAGTKVAICGRTGSGKSSTLAALLRLIDLRSGAITIDGIDISTVVRQDLRSKLITLPQEPFYYHASIRDNLDVRGQFSTEELLDILEVVGMREVIDKKGGLDAMANADVLSHGQSQLLCLARAILRPNKILILDEATSSVDKKTEEKMVDIIREKFQDRTVISVAHNLNTIMDYDEVIVLEAGRIIEQGKPLALALEPSFFASLLKAADGESEDALEEETISNIASPRSR</sequence>
<accession>S3D778</accession>
<gene>
    <name evidence="4" type="primary">gloK</name>
    <name evidence="5" type="synonym">GLTRT</name>
    <name type="ORF">GLAREA_10036</name>
</gene>
<dbReference type="EMBL" id="KE145356">
    <property type="protein sequence ID" value="EPE34342.1"/>
    <property type="molecule type" value="Genomic_DNA"/>
</dbReference>
<dbReference type="RefSeq" id="XP_008078277.1">
    <property type="nucleotide sequence ID" value="XM_008080086.1"/>
</dbReference>
<dbReference type="SMR" id="S3D778"/>
<dbReference type="GeneID" id="19469083"/>
<dbReference type="KEGG" id="glz:GLAREA_10036"/>
<dbReference type="eggNOG" id="KOG0054">
    <property type="taxonomic scope" value="Eukaryota"/>
</dbReference>
<dbReference type="HOGENOM" id="CLU_000604_27_5_1"/>
<dbReference type="OMA" id="DTHSEHE"/>
<dbReference type="OrthoDB" id="6500128at2759"/>
<dbReference type="Proteomes" id="UP000016922">
    <property type="component" value="Unassembled WGS sequence"/>
</dbReference>
<dbReference type="GO" id="GO:0005886">
    <property type="term" value="C:plasma membrane"/>
    <property type="evidence" value="ECO:0007669"/>
    <property type="project" value="UniProtKB-SubCell"/>
</dbReference>
<dbReference type="GO" id="GO:0140359">
    <property type="term" value="F:ABC-type transporter activity"/>
    <property type="evidence" value="ECO:0007669"/>
    <property type="project" value="InterPro"/>
</dbReference>
<dbReference type="GO" id="GO:0005524">
    <property type="term" value="F:ATP binding"/>
    <property type="evidence" value="ECO:0007669"/>
    <property type="project" value="UniProtKB-KW"/>
</dbReference>
<dbReference type="GO" id="GO:0016887">
    <property type="term" value="F:ATP hydrolysis activity"/>
    <property type="evidence" value="ECO:0007669"/>
    <property type="project" value="InterPro"/>
</dbReference>
<dbReference type="CDD" id="cd18580">
    <property type="entry name" value="ABC_6TM_ABCC_D2"/>
    <property type="match status" value="1"/>
</dbReference>
<dbReference type="CDD" id="cd03250">
    <property type="entry name" value="ABCC_MRP_domain1"/>
    <property type="match status" value="1"/>
</dbReference>
<dbReference type="CDD" id="cd03244">
    <property type="entry name" value="ABCC_MRP_domain2"/>
    <property type="match status" value="1"/>
</dbReference>
<dbReference type="FunFam" id="1.20.1560.10:FF:000066">
    <property type="entry name" value="ABC multidrug transporter (Eurofung)"/>
    <property type="match status" value="1"/>
</dbReference>
<dbReference type="FunFam" id="3.40.50.300:FF:000838">
    <property type="entry name" value="ABC multidrug transporter (Eurofung)"/>
    <property type="match status" value="1"/>
</dbReference>
<dbReference type="FunFam" id="3.40.50.300:FF:001854">
    <property type="entry name" value="ABC multidrug transporter (Eurofung)"/>
    <property type="match status" value="1"/>
</dbReference>
<dbReference type="Gene3D" id="1.20.1560.10">
    <property type="entry name" value="ABC transporter type 1, transmembrane domain"/>
    <property type="match status" value="2"/>
</dbReference>
<dbReference type="Gene3D" id="3.40.50.300">
    <property type="entry name" value="P-loop containing nucleotide triphosphate hydrolases"/>
    <property type="match status" value="2"/>
</dbReference>
<dbReference type="InterPro" id="IPR003593">
    <property type="entry name" value="AAA+_ATPase"/>
</dbReference>
<dbReference type="InterPro" id="IPR011527">
    <property type="entry name" value="ABC1_TM_dom"/>
</dbReference>
<dbReference type="InterPro" id="IPR036640">
    <property type="entry name" value="ABC1_TM_sf"/>
</dbReference>
<dbReference type="InterPro" id="IPR003439">
    <property type="entry name" value="ABC_transporter-like_ATP-bd"/>
</dbReference>
<dbReference type="InterPro" id="IPR017871">
    <property type="entry name" value="ABC_transporter-like_CS"/>
</dbReference>
<dbReference type="InterPro" id="IPR050173">
    <property type="entry name" value="ABC_transporter_C-like"/>
</dbReference>
<dbReference type="InterPro" id="IPR044726">
    <property type="entry name" value="ABCC_6TM_D2"/>
</dbReference>
<dbReference type="InterPro" id="IPR027417">
    <property type="entry name" value="P-loop_NTPase"/>
</dbReference>
<dbReference type="PANTHER" id="PTHR24223:SF399">
    <property type="entry name" value="ABC TRANSPORTER ATNG"/>
    <property type="match status" value="1"/>
</dbReference>
<dbReference type="PANTHER" id="PTHR24223">
    <property type="entry name" value="ATP-BINDING CASSETTE SUB-FAMILY C"/>
    <property type="match status" value="1"/>
</dbReference>
<dbReference type="Pfam" id="PF00664">
    <property type="entry name" value="ABC_membrane"/>
    <property type="match status" value="1"/>
</dbReference>
<dbReference type="Pfam" id="PF00005">
    <property type="entry name" value="ABC_tran"/>
    <property type="match status" value="2"/>
</dbReference>
<dbReference type="SMART" id="SM00382">
    <property type="entry name" value="AAA"/>
    <property type="match status" value="2"/>
</dbReference>
<dbReference type="SUPFAM" id="SSF90123">
    <property type="entry name" value="ABC transporter transmembrane region"/>
    <property type="match status" value="2"/>
</dbReference>
<dbReference type="SUPFAM" id="SSF52540">
    <property type="entry name" value="P-loop containing nucleoside triphosphate hydrolases"/>
    <property type="match status" value="2"/>
</dbReference>
<dbReference type="PROSITE" id="PS50929">
    <property type="entry name" value="ABC_TM1F"/>
    <property type="match status" value="2"/>
</dbReference>
<dbReference type="PROSITE" id="PS00211">
    <property type="entry name" value="ABC_TRANSPORTER_1"/>
    <property type="match status" value="2"/>
</dbReference>
<dbReference type="PROSITE" id="PS50893">
    <property type="entry name" value="ABC_TRANSPORTER_2"/>
    <property type="match status" value="2"/>
</dbReference>
<organism>
    <name type="scientific">Glarea lozoyensis (strain ATCC 20868 / MF5171)</name>
    <dbReference type="NCBI Taxonomy" id="1116229"/>
    <lineage>
        <taxon>Eukaryota</taxon>
        <taxon>Fungi</taxon>
        <taxon>Dikarya</taxon>
        <taxon>Ascomycota</taxon>
        <taxon>Pezizomycotina</taxon>
        <taxon>Leotiomycetes</taxon>
        <taxon>Helotiales</taxon>
        <taxon>Helotiaceae</taxon>
        <taxon>Glarea</taxon>
    </lineage>
</organism>
<evidence type="ECO:0000255" key="1"/>
<evidence type="ECO:0000255" key="2">
    <source>
        <dbReference type="PROSITE-ProRule" id="PRU00434"/>
    </source>
</evidence>
<evidence type="ECO:0000255" key="3">
    <source>
        <dbReference type="PROSITE-ProRule" id="PRU00441"/>
    </source>
</evidence>
<evidence type="ECO:0000303" key="4">
    <source>
    </source>
</evidence>
<evidence type="ECO:0000303" key="5">
    <source>
    </source>
</evidence>
<evidence type="ECO:0000305" key="6"/>
<evidence type="ECO:0000305" key="7">
    <source>
    </source>
</evidence>
<evidence type="ECO:0000305" key="8">
    <source>
    </source>
</evidence>
<name>GLOK_GLAL2</name>
<keyword id="KW-0067">ATP-binding</keyword>
<keyword id="KW-1003">Cell membrane</keyword>
<keyword id="KW-0378">Hydrolase</keyword>
<keyword id="KW-0472">Membrane</keyword>
<keyword id="KW-0547">Nucleotide-binding</keyword>
<keyword id="KW-1185">Reference proteome</keyword>
<keyword id="KW-0677">Repeat</keyword>
<keyword id="KW-0812">Transmembrane</keyword>
<keyword id="KW-1133">Transmembrane helix</keyword>
<keyword id="KW-0813">Transport</keyword>
<proteinExistence type="inferred from homology"/>
<feature type="chain" id="PRO_0000444492" description="ABC transporter gloK">
    <location>
        <begin position="1"/>
        <end position="1323"/>
    </location>
</feature>
<feature type="transmembrane region" description="Helical" evidence="1">
    <location>
        <begin position="6"/>
        <end position="26"/>
    </location>
</feature>
<feature type="transmembrane region" description="Helical" evidence="1">
    <location>
        <begin position="102"/>
        <end position="122"/>
    </location>
</feature>
<feature type="transmembrane region" description="Helical" evidence="1 3">
    <location>
        <begin position="138"/>
        <end position="158"/>
    </location>
</feature>
<feature type="transmembrane region" description="Helical" evidence="1 3">
    <location>
        <begin position="217"/>
        <end position="237"/>
    </location>
</feature>
<feature type="transmembrane region" description="Helical" evidence="1 3">
    <location>
        <begin position="240"/>
        <end position="260"/>
    </location>
</feature>
<feature type="transmembrane region" description="Helical" evidence="1 3">
    <location>
        <begin position="325"/>
        <end position="345"/>
    </location>
</feature>
<feature type="transmembrane region" description="Helical" evidence="1 3">
    <location>
        <begin position="359"/>
        <end position="379"/>
    </location>
</feature>
<feature type="transmembrane region" description="Helical" evidence="1 3">
    <location>
        <begin position="748"/>
        <end position="768"/>
    </location>
</feature>
<feature type="transmembrane region" description="Helical" evidence="1 3">
    <location>
        <begin position="795"/>
        <end position="815"/>
    </location>
</feature>
<feature type="transmembrane region" description="Helical" evidence="1 3">
    <location>
        <begin position="821"/>
        <end position="841"/>
    </location>
</feature>
<feature type="transmembrane region" description="Helical" evidence="1 3">
    <location>
        <begin position="859"/>
        <end position="879"/>
    </location>
</feature>
<feature type="transmembrane region" description="Helical" evidence="1 3">
    <location>
        <begin position="891"/>
        <end position="910"/>
    </location>
</feature>
<feature type="transmembrane region" description="Helical" evidence="1 3">
    <location>
        <begin position="976"/>
        <end position="996"/>
    </location>
</feature>
<feature type="transmembrane region" description="Helical" evidence="1 3">
    <location>
        <begin position="1006"/>
        <end position="1026"/>
    </location>
</feature>
<feature type="domain" description="ABC transmembrane type-1 1" evidence="3">
    <location>
        <begin position="142"/>
        <end position="380"/>
    </location>
</feature>
<feature type="domain" description="ABC transporter 1" evidence="2">
    <location>
        <begin position="471"/>
        <end position="697"/>
    </location>
</feature>
<feature type="domain" description="ABC transmembrane type-1 2" evidence="3">
    <location>
        <begin position="752"/>
        <end position="1031"/>
    </location>
</feature>
<feature type="domain" description="ABC transporter 2" evidence="2">
    <location>
        <begin position="1069"/>
        <end position="1300"/>
    </location>
</feature>
<feature type="binding site" evidence="2">
    <location>
        <begin position="503"/>
        <end position="510"/>
    </location>
    <ligand>
        <name>ATP</name>
        <dbReference type="ChEBI" id="CHEBI:30616"/>
    </ligand>
</feature>
<feature type="binding site" evidence="2">
    <location>
        <begin position="1103"/>
        <end position="1110"/>
    </location>
    <ligand>
        <name>ATP</name>
        <dbReference type="ChEBI" id="CHEBI:30616"/>
    </ligand>
</feature>
<reference key="1">
    <citation type="journal article" date="2013" name="BMC Genomics">
        <title>Genomics-driven discovery of the pneumocandin biosynthetic gene cluster in the fungus Glarea lozoyensis.</title>
        <authorList>
            <person name="Chen L."/>
            <person name="Yue Q."/>
            <person name="Zhang X."/>
            <person name="Xiang M."/>
            <person name="Wang C."/>
            <person name="Li S."/>
            <person name="Che Y."/>
            <person name="Ortiz-Lopez F.J."/>
            <person name="Bills G.F."/>
            <person name="Liu X."/>
            <person name="An Z."/>
        </authorList>
    </citation>
    <scope>NUCLEOTIDE SEQUENCE [LARGE SCALE GENOMIC DNA]</scope>
    <scope>IDENTIFICATION</scope>
    <scope>FUNCTION</scope>
    <source>
        <strain>ATCC 20868 / MF5171</strain>
    </source>
</reference>
<reference key="2">
    <citation type="journal article" date="2014" name="ChemBioChem">
        <title>Pneumocandin biosynthesis: involvement of a trans-selective proline hydroxylase.</title>
        <authorList>
            <person name="Houwaart S."/>
            <person name="Youssar L."/>
            <person name="Huettel W."/>
        </authorList>
    </citation>
    <scope>IDENTIFICATION</scope>
    <scope>FUNCTION</scope>
</reference>
<reference key="3">
    <citation type="journal article" date="2015" name="ACS Chem. Biol.">
        <title>Genetic manipulation of the pneumocandin biosynthetic pathway for generation of analogues and evaluation of their antifungal activity.</title>
        <authorList>
            <person name="Li Y."/>
            <person name="Chen L."/>
            <person name="Yue Q."/>
            <person name="Liu X."/>
            <person name="An Z."/>
            <person name="Bills G.F."/>
        </authorList>
    </citation>
    <scope>IDENTIFICATION</scope>
</reference>
<comment type="function">
    <text evidence="7 8">3-isopropylmalate dehydratase large subunit; part of the gene cluster that mediates the biosynthesis of pneumocandins, lipohexapeptides of the echinocandin family that prevent fungal cell wall formation by non-competitive inhibition of beta-1,3-glucan synthase (PubMed:23688303, PubMed:25270390). Possibly secretes antifungal pneumocandins, thus avoiding of intracellular accumulation and ameliorating the toxicity to the producing cells (PubMed:23688303).</text>
</comment>
<comment type="subcellular location">
    <subcellularLocation>
        <location evidence="6">Cell membrane</location>
        <topology evidence="1">Multi-pass membrane protein</topology>
    </subcellularLocation>
</comment>
<comment type="similarity">
    <text evidence="6">Belongs to the ABC transporter superfamily. ABCC family. Conjugate transporter (TC 3.A.1.208) subfamily.</text>
</comment>
<protein>
    <recommendedName>
        <fullName evidence="4">ABC transporter gloK</fullName>
    </recommendedName>
    <alternativeName>
        <fullName evidence="4">Pneumocandin biosynthesis cluster protein K</fullName>
    </alternativeName>
</protein>